<protein>
    <recommendedName>
        <fullName evidence="12">Dolichyl-diphosphooligosaccharide--protein glycosyltransferase subunit DAD1</fullName>
        <shortName>Oligosaccharyl transferase subunit DAD1</shortName>
    </recommendedName>
    <alternativeName>
        <fullName>Defender against cell death 1</fullName>
        <shortName>DAD-1</shortName>
    </alternativeName>
</protein>
<proteinExistence type="evidence at protein level"/>
<keyword id="KW-0002">3D-structure</keyword>
<keyword id="KW-0007">Acetylation</keyword>
<keyword id="KW-0053">Apoptosis</keyword>
<keyword id="KW-0903">Direct protein sequencing</keyword>
<keyword id="KW-0256">Endoplasmic reticulum</keyword>
<keyword id="KW-0472">Membrane</keyword>
<keyword id="KW-1267">Proteomics identification</keyword>
<keyword id="KW-1185">Reference proteome</keyword>
<keyword id="KW-0812">Transmembrane</keyword>
<keyword id="KW-1133">Transmembrane helix</keyword>
<accession>P61803</accession>
<accession>D3DS25</accession>
<accession>O08552</accession>
<accession>O70364</accession>
<accession>P46966</accession>
<accession>P46968</accession>
<accession>Q6FGA3</accession>
<accession>Q96GB7</accession>
<organism>
    <name type="scientific">Homo sapiens</name>
    <name type="common">Human</name>
    <dbReference type="NCBI Taxonomy" id="9606"/>
    <lineage>
        <taxon>Eukaryota</taxon>
        <taxon>Metazoa</taxon>
        <taxon>Chordata</taxon>
        <taxon>Craniata</taxon>
        <taxon>Vertebrata</taxon>
        <taxon>Euteleostomi</taxon>
        <taxon>Mammalia</taxon>
        <taxon>Eutheria</taxon>
        <taxon>Euarchontoglires</taxon>
        <taxon>Primates</taxon>
        <taxon>Haplorrhini</taxon>
        <taxon>Catarrhini</taxon>
        <taxon>Hominidae</taxon>
        <taxon>Homo</taxon>
    </lineage>
</organism>
<comment type="function">
    <text evidence="1 4 7">Subunit of the oligosaccharyl transferase (OST) complex that catalyzes the initial transfer of a defined glycan (Glc(3)Man(9)GlcNAc(2) in eukaryotes) from the lipid carrier dolichol-pyrophosphate to an asparagine residue within an Asn-X-Ser/Thr consensus motif in nascent polypeptide chains, the first step in protein N-glycosylation (PubMed:22467853, PubMed:31831667). N-glycosylation occurs cotranslationally and the complex associates with the Sec61 complex at the channel-forming translocon complex that mediates protein translocation across the endoplasmic reticulum (ER). All subunits are required for a maximal enzyme activity (By similarity). Required for the assembly of both SST3A- and SS3B-containing OST complexes. Loss of the DAD1 protein triggers apoptosis (PubMed:22467853).</text>
</comment>
<comment type="pathway">
    <text evidence="7">Protein modification; protein glycosylation.</text>
</comment>
<comment type="subunit">
    <text evidence="1 5 7 8 9">Component of the oligosaccharyltransferase (OST) complex (PubMed:25135935, PubMed:31831667, PubMed:36697828, PubMed:38670073). OST exists in two different complex forms which contain common core subunits RPN1, RPN2, OST48, OST4, DAD1 and TMEM258, either STT3A or STT3B as catalytic subunits, and form-specific accessory subunits (PubMed:31831667, PubMed:36697828, PubMed:38670073). STT3A complex assembly occurs through the formation of 3 subcomplexes. Subcomplex 1 contains RPN1 and TMEM258, subcomplex 2 contains the STT3A-specific subunits STT3A, DC2/OSTC, and KCP2 as well as the core subunit OST4, and subcomplex 3 contains RPN2, DAD1, and OST48. The STT3A complex can form stable complexes with the Sec61 complex or with both the Sec61 and TRAP complexes (By similarity).</text>
</comment>
<comment type="subcellular location">
    <subcellularLocation>
        <location>Endoplasmic reticulum membrane</location>
        <topology evidence="12">Multi-pass membrane protein</topology>
    </subcellularLocation>
</comment>
<comment type="similarity">
    <text evidence="12">Belongs to the DAD/OST2 family.</text>
</comment>
<reference key="1">
    <citation type="journal article" date="1993" name="Mol. Cell. Biol.">
        <title>Molecular cloning of a human cDNA encoding a novel protein, DAD1, whose defect causes apoptotic cell death in hamster BHK21 cells.</title>
        <authorList>
            <person name="Nakashima T."/>
            <person name="Sekiguchi T."/>
            <person name="Kuraoka A."/>
            <person name="Fukushima K."/>
            <person name="Shibata Y."/>
            <person name="Komiyama S."/>
            <person name="Nishimoto T."/>
        </authorList>
    </citation>
    <scope>NUCLEOTIDE SEQUENCE [MRNA]</scope>
</reference>
<reference key="2">
    <citation type="submission" date="1997-01" db="EMBL/GenBank/DDBJ databases">
        <authorList>
            <person name="Wang K."/>
            <person name="Lee I.Y."/>
            <person name="Hood L."/>
        </authorList>
    </citation>
    <scope>NUCLEOTIDE SEQUENCE [GENOMIC DNA]</scope>
</reference>
<reference key="3">
    <citation type="submission" date="2004-05" db="EMBL/GenBank/DDBJ databases">
        <title>Cloning of human full open reading frames in Gateway(TM) system entry vector (pDONR201).</title>
        <authorList>
            <person name="Ebert L."/>
            <person name="Schick M."/>
            <person name="Neubert P."/>
            <person name="Schatten R."/>
            <person name="Henze S."/>
            <person name="Korn B."/>
        </authorList>
    </citation>
    <scope>NUCLEOTIDE SEQUENCE [LARGE SCALE MRNA]</scope>
</reference>
<reference key="4">
    <citation type="submission" date="2004-06" db="EMBL/GenBank/DDBJ databases">
        <title>Cloning of human full open reading frames in Gateway(TM) system entry vector (pDONR201).</title>
        <authorList>
            <person name="Halleck A."/>
            <person name="Ebert L."/>
            <person name="Mkoundinya M."/>
            <person name="Schick M."/>
            <person name="Eisenstein S."/>
            <person name="Neubert P."/>
            <person name="Kstrang K."/>
            <person name="Schatten R."/>
            <person name="Shen B."/>
            <person name="Henze S."/>
            <person name="Mar W."/>
            <person name="Korn B."/>
            <person name="Zuo D."/>
            <person name="Hu Y."/>
            <person name="LaBaer J."/>
        </authorList>
    </citation>
    <scope>NUCLEOTIDE SEQUENCE [LARGE SCALE MRNA]</scope>
</reference>
<reference key="5">
    <citation type="submission" date="2003-03" db="EMBL/GenBank/DDBJ databases">
        <authorList>
            <consortium name="NIEHS SNPs program"/>
        </authorList>
    </citation>
    <scope>NUCLEOTIDE SEQUENCE [GENOMIC DNA]</scope>
    <scope>VARIANT THR-83</scope>
</reference>
<reference key="6">
    <citation type="submission" date="2005-09" db="EMBL/GenBank/DDBJ databases">
        <authorList>
            <person name="Mural R.J."/>
            <person name="Istrail S."/>
            <person name="Sutton G.G."/>
            <person name="Florea L."/>
            <person name="Halpern A.L."/>
            <person name="Mobarry C.M."/>
            <person name="Lippert R."/>
            <person name="Walenz B."/>
            <person name="Shatkay H."/>
            <person name="Dew I."/>
            <person name="Miller J.R."/>
            <person name="Flanigan M.J."/>
            <person name="Edwards N.J."/>
            <person name="Bolanos R."/>
            <person name="Fasulo D."/>
            <person name="Halldorsson B.V."/>
            <person name="Hannenhalli S."/>
            <person name="Turner R."/>
            <person name="Yooseph S."/>
            <person name="Lu F."/>
            <person name="Nusskern D.R."/>
            <person name="Shue B.C."/>
            <person name="Zheng X.H."/>
            <person name="Zhong F."/>
            <person name="Delcher A.L."/>
            <person name="Huson D.H."/>
            <person name="Kravitz S.A."/>
            <person name="Mouchard L."/>
            <person name="Reinert K."/>
            <person name="Remington K.A."/>
            <person name="Clark A.G."/>
            <person name="Waterman M.S."/>
            <person name="Eichler E.E."/>
            <person name="Adams M.D."/>
            <person name="Hunkapiller M.W."/>
            <person name="Myers E.W."/>
            <person name="Venter J.C."/>
        </authorList>
    </citation>
    <scope>NUCLEOTIDE SEQUENCE [LARGE SCALE GENOMIC DNA]</scope>
</reference>
<reference key="7">
    <citation type="journal article" date="2004" name="Genome Res.">
        <title>The status, quality, and expansion of the NIH full-length cDNA project: the Mammalian Gene Collection (MGC).</title>
        <authorList>
            <consortium name="The MGC Project Team"/>
        </authorList>
    </citation>
    <scope>NUCLEOTIDE SEQUENCE [LARGE SCALE MRNA]</scope>
    <source>
        <tissue>Brain</tissue>
        <tissue>Skin</tissue>
    </source>
</reference>
<reference key="8">
    <citation type="journal article" date="2003" name="Nat. Biotechnol.">
        <title>Exploring proteomes and analyzing protein processing by mass spectrometric identification of sorted N-terminal peptides.</title>
        <authorList>
            <person name="Gevaert K."/>
            <person name="Goethals M."/>
            <person name="Martens L."/>
            <person name="Van Damme J."/>
            <person name="Staes A."/>
            <person name="Thomas G.R."/>
            <person name="Vandekerckhove J."/>
        </authorList>
    </citation>
    <scope>PROTEIN SEQUENCE OF 2-11</scope>
    <source>
        <tissue>Platelet</tissue>
    </source>
</reference>
<reference key="9">
    <citation type="submission" date="2005-06" db="UniProtKB">
        <authorList>
            <person name="Bienvenut W.V."/>
        </authorList>
    </citation>
    <scope>PROTEIN SEQUENCE OF 2-23</scope>
    <scope>ACETYLATION AT SER-2</scope>
    <scope>IDENTIFICATION BY MASS SPECTROMETRY</scope>
    <source>
        <tissue>B-cell lymphoma</tissue>
    </source>
</reference>
<reference key="10">
    <citation type="journal article" date="2011" name="BMC Syst. Biol.">
        <title>Initial characterization of the human central proteome.</title>
        <authorList>
            <person name="Burkard T.R."/>
            <person name="Planyavsky M."/>
            <person name="Kaupe I."/>
            <person name="Breitwieser F.P."/>
            <person name="Buerckstuemmer T."/>
            <person name="Bennett K.L."/>
            <person name="Superti-Furga G."/>
            <person name="Colinge J."/>
        </authorList>
    </citation>
    <scope>IDENTIFICATION BY MASS SPECTROMETRY [LARGE SCALE ANALYSIS]</scope>
</reference>
<reference key="11">
    <citation type="journal article" date="2012" name="J. Cell Sci.">
        <title>The oligosaccharyltransferase subunits OST48, DAD1 and KCP2 function as ubiquitous and selective modulators of mammalian N-glycosylation.</title>
        <authorList>
            <person name="Roboti P."/>
            <person name="High S."/>
        </authorList>
    </citation>
    <scope>FUNCTION</scope>
</reference>
<reference key="12">
    <citation type="journal article" date="2012" name="Mol. Cell. Proteomics">
        <title>Comparative large-scale characterisation of plant vs. mammal proteins reveals similar and idiosyncratic N-alpha acetylation features.</title>
        <authorList>
            <person name="Bienvenut W.V."/>
            <person name="Sumpton D."/>
            <person name="Martinez A."/>
            <person name="Lilla S."/>
            <person name="Espagne C."/>
            <person name="Meinnel T."/>
            <person name="Giglione C."/>
        </authorList>
    </citation>
    <scope>ACETYLATION [LARGE SCALE ANALYSIS] AT SER-2</scope>
    <scope>CLEAVAGE OF INITIATOR METHIONINE [LARGE SCALE ANALYSIS]</scope>
    <scope>IDENTIFICATION BY MASS SPECTROMETRY [LARGE SCALE ANALYSIS]</scope>
</reference>
<reference key="13">
    <citation type="journal article" date="2012" name="Proc. Natl. Acad. Sci. U.S.A.">
        <title>N-terminal acetylome analyses and functional insights of the N-terminal acetyltransferase NatB.</title>
        <authorList>
            <person name="Van Damme P."/>
            <person name="Lasa M."/>
            <person name="Polevoda B."/>
            <person name="Gazquez C."/>
            <person name="Elosegui-Artola A."/>
            <person name="Kim D.S."/>
            <person name="De Juan-Pardo E."/>
            <person name="Demeyer K."/>
            <person name="Hole K."/>
            <person name="Larrea E."/>
            <person name="Timmerman E."/>
            <person name="Prieto J."/>
            <person name="Arnesen T."/>
            <person name="Sherman F."/>
            <person name="Gevaert K."/>
            <person name="Aldabe R."/>
        </authorList>
    </citation>
    <scope>IDENTIFICATION BY MASS SPECTROMETRY [LARGE SCALE ANALYSIS]</scope>
</reference>
<reference key="14">
    <citation type="journal article" date="2014" name="J. Cell Biol.">
        <title>Oxidoreductase activity is necessary for N-glycosylation of cysteine-proximal acceptor sites in glycoproteins.</title>
        <authorList>
            <person name="Cherepanova N.A."/>
            <person name="Shrimal S."/>
            <person name="Gilmore R."/>
        </authorList>
    </citation>
    <scope>IDENTIFICATION IN THE OLIGOSACCHARYLTRANSFERASE COMPLEX</scope>
</reference>
<reference key="15">
    <citation type="journal article" date="2015" name="Hum. Mol. Genet.">
        <title>Biochemical and cellular analysis of Ogden syndrome reveals downstream Nt-acetylation defects.</title>
        <authorList>
            <person name="Myklebust L.M."/>
            <person name="Van Damme P."/>
            <person name="Stoeve S.I."/>
            <person name="Doerfel M.J."/>
            <person name="Abboud A."/>
            <person name="Kalvik T.V."/>
            <person name="Grauffel C."/>
            <person name="Jonckheere V."/>
            <person name="Wu Y."/>
            <person name="Swensen J."/>
            <person name="Kaasa H."/>
            <person name="Liszczak G."/>
            <person name="Marmorstein R."/>
            <person name="Reuter N."/>
            <person name="Lyon G.J."/>
            <person name="Gevaert K."/>
            <person name="Arnesen T."/>
        </authorList>
    </citation>
    <scope>ACETYLATION AT SER-2</scope>
    <scope>CLEAVAGE OF INITIATOR METHIONINE</scope>
</reference>
<reference key="16">
    <citation type="journal article" date="2015" name="Proteomics">
        <title>N-terminome analysis of the human mitochondrial proteome.</title>
        <authorList>
            <person name="Vaca Jacome A.S."/>
            <person name="Rabilloud T."/>
            <person name="Schaeffer-Reiss C."/>
            <person name="Rompais M."/>
            <person name="Ayoub D."/>
            <person name="Lane L."/>
            <person name="Bairoch A."/>
            <person name="Van Dorsselaer A."/>
            <person name="Carapito C."/>
        </authorList>
    </citation>
    <scope>ACETYLATION [LARGE SCALE ANALYSIS] AT SER-2</scope>
    <scope>CLEAVAGE OF INITIATOR METHIONINE [LARGE SCALE ANALYSIS]</scope>
    <scope>IDENTIFICATION BY MASS SPECTROMETRY [LARGE SCALE ANALYSIS]</scope>
</reference>
<reference evidence="14 15" key="17">
    <citation type="journal article" date="2019" name="Science">
        <title>Cryo-electron microscopy structures of human oligosaccharyltransferase complexes OST-A and OST-B.</title>
        <authorList>
            <person name="Ramirez A.S."/>
            <person name="Kowal J."/>
            <person name="Locher K.P."/>
        </authorList>
    </citation>
    <scope>STRUCTURE BY ELECTRON MICROSCOPY (3.50 ANGSTROMS)</scope>
    <scope>IDENTIFICATION OF THE OLIGOSACCHARYLTRANSFERASE (OST) COMPLEX</scope>
    <scope>FUNCTION</scope>
    <scope>PATHWAY</scope>
</reference>
<reference evidence="16" key="18">
    <citation type="journal article" date="2023" name="Nature">
        <title>Visualization of translation and protein biogenesis at the ER membrane.</title>
        <authorList>
            <person name="Gemmer M."/>
            <person name="Chaillet M.L."/>
            <person name="van Loenhout J."/>
            <person name="Cuevas Arenas R."/>
            <person name="Vismpas D."/>
            <person name="Grollers-Mulderij M."/>
            <person name="Koh F.A."/>
            <person name="Albanese P."/>
            <person name="Scheltema R.A."/>
            <person name="Howes S.C."/>
            <person name="Kotecha A."/>
            <person name="Fedry J."/>
            <person name="Forster F."/>
        </authorList>
    </citation>
    <scope>STRUCTURE BY ELECTRON MICROSCOPY (7.60 ANGSTROMS) OF THE STT3A-CONTAINING OLIGOSACCHARYLTRANSFERASE (OST) AND TRANSLOCON COMPLEXES</scope>
    <scope>SUBUNIT</scope>
</reference>
<reference evidence="17" key="19">
    <citation type="journal article" date="2024" name="Cell">
        <title>Positive selection CRISPR screens reveal a druggable pocket in an oligosaccharyltransferase required for inflammatory signaling to NF-kappaB.</title>
        <authorList>
            <person name="Lampson B.L."/>
            <person name="Ramrez A.S."/>
            <person name="Baro M."/>
            <person name="He L."/>
            <person name="Hegde M."/>
            <person name="Koduri V."/>
            <person name="Pfaff J.L."/>
            <person name="Hanna R.E."/>
            <person name="Kowal J."/>
            <person name="Shirole N.H."/>
            <person name="He Y."/>
            <person name="Doench J.G."/>
            <person name="Contessa J.N."/>
            <person name="Locher K.P."/>
            <person name="Kaelin W.G."/>
        </authorList>
    </citation>
    <scope>STRUCTURE BY ELECTRON MICROSCOPY (3.61 ANGSTROMS) OF THE STT3A-CONTAINING OLIGOSACCHARYLTRANSFERASE (OST)</scope>
    <scope>SUBUNIT</scope>
</reference>
<name>DAD1_HUMAN</name>
<dbReference type="EMBL" id="D15057">
    <property type="protein sequence ID" value="BAA03650.1"/>
    <property type="molecule type" value="mRNA"/>
</dbReference>
<dbReference type="EMBL" id="U84213">
    <property type="protein sequence ID" value="AAB58540.1"/>
    <property type="molecule type" value="Genomic_DNA"/>
</dbReference>
<dbReference type="EMBL" id="U84212">
    <property type="protein sequence ID" value="AAB58540.1"/>
    <property type="status" value="JOINED"/>
    <property type="molecule type" value="Genomic_DNA"/>
</dbReference>
<dbReference type="EMBL" id="CR407682">
    <property type="protein sequence ID" value="CAG28610.1"/>
    <property type="molecule type" value="mRNA"/>
</dbReference>
<dbReference type="EMBL" id="CR542204">
    <property type="protein sequence ID" value="CAG47001.1"/>
    <property type="molecule type" value="mRNA"/>
</dbReference>
<dbReference type="EMBL" id="AY259117">
    <property type="protein sequence ID" value="AAO74827.1"/>
    <property type="molecule type" value="Genomic_DNA"/>
</dbReference>
<dbReference type="EMBL" id="CH471078">
    <property type="protein sequence ID" value="EAW66252.1"/>
    <property type="molecule type" value="Genomic_DNA"/>
</dbReference>
<dbReference type="EMBL" id="CH471078">
    <property type="protein sequence ID" value="EAW66253.1"/>
    <property type="molecule type" value="Genomic_DNA"/>
</dbReference>
<dbReference type="EMBL" id="BC007403">
    <property type="protein sequence ID" value="AAH07403.1"/>
    <property type="molecule type" value="mRNA"/>
</dbReference>
<dbReference type="EMBL" id="BC009798">
    <property type="protein sequence ID" value="AAH09798.1"/>
    <property type="molecule type" value="mRNA"/>
</dbReference>
<dbReference type="CCDS" id="CCDS9571.1"/>
<dbReference type="PIR" id="A54437">
    <property type="entry name" value="A54437"/>
</dbReference>
<dbReference type="RefSeq" id="NP_001335.1">
    <property type="nucleotide sequence ID" value="NM_001344.4"/>
</dbReference>
<dbReference type="PDB" id="6S7O">
    <property type="method" value="EM"/>
    <property type="resolution" value="3.50 A"/>
    <property type="chains" value="D=1-113"/>
</dbReference>
<dbReference type="PDB" id="6S7T">
    <property type="method" value="EM"/>
    <property type="resolution" value="3.50 A"/>
    <property type="chains" value="D=1-113"/>
</dbReference>
<dbReference type="PDB" id="8B6L">
    <property type="method" value="EM"/>
    <property type="resolution" value="7.60 A"/>
    <property type="chains" value="M=1-113"/>
</dbReference>
<dbReference type="PDB" id="8PN9">
    <property type="method" value="EM"/>
    <property type="resolution" value="3.61 A"/>
    <property type="chains" value="D=1-113"/>
</dbReference>
<dbReference type="PDBsum" id="6S7O"/>
<dbReference type="PDBsum" id="6S7T"/>
<dbReference type="PDBsum" id="8B6L"/>
<dbReference type="PDBsum" id="8PN9"/>
<dbReference type="EMDB" id="EMD-10110"/>
<dbReference type="EMDB" id="EMD-10112"/>
<dbReference type="EMDB" id="EMD-15870"/>
<dbReference type="EMDB" id="EMD-17779"/>
<dbReference type="SMR" id="P61803"/>
<dbReference type="BioGRID" id="107973">
    <property type="interactions" value="119"/>
</dbReference>
<dbReference type="ComplexPortal" id="CPX-5621">
    <property type="entry name" value="Oligosaccharyltransferase complex A"/>
</dbReference>
<dbReference type="ComplexPortal" id="CPX-5622">
    <property type="entry name" value="Oligosaccharyltransferase complex B, MAGT1 variant"/>
</dbReference>
<dbReference type="ComplexPortal" id="CPX-8738">
    <property type="entry name" value="Oligosaccharyltransferase complex B, TUCS3 variant"/>
</dbReference>
<dbReference type="CORUM" id="P61803"/>
<dbReference type="FunCoup" id="P61803">
    <property type="interactions" value="1666"/>
</dbReference>
<dbReference type="IntAct" id="P61803">
    <property type="interactions" value="76"/>
</dbReference>
<dbReference type="MINT" id="P61803"/>
<dbReference type="STRING" id="9606.ENSP00000250498"/>
<dbReference type="TCDB" id="9.B.142.3.17">
    <property type="family name" value="the integral membrane glycosyltransferase family 39 (gt39) family"/>
</dbReference>
<dbReference type="GlyGen" id="P61803">
    <property type="glycosylation" value="1 site, 1 O-linked glycan (1 site)"/>
</dbReference>
<dbReference type="iPTMnet" id="P61803"/>
<dbReference type="PhosphoSitePlus" id="P61803"/>
<dbReference type="SwissPalm" id="P61803"/>
<dbReference type="BioMuta" id="DAD1"/>
<dbReference type="DMDM" id="48428858"/>
<dbReference type="jPOST" id="P61803"/>
<dbReference type="MassIVE" id="P61803"/>
<dbReference type="PaxDb" id="9606-ENSP00000250498"/>
<dbReference type="PeptideAtlas" id="P61803"/>
<dbReference type="ProteomicsDB" id="57334"/>
<dbReference type="Pumba" id="P61803"/>
<dbReference type="TopDownProteomics" id="P61803"/>
<dbReference type="Antibodypedia" id="7790">
    <property type="antibodies" value="264 antibodies from 30 providers"/>
</dbReference>
<dbReference type="DNASU" id="1603"/>
<dbReference type="Ensembl" id="ENST00000250498.9">
    <property type="protein sequence ID" value="ENSP00000250498.4"/>
    <property type="gene ID" value="ENSG00000129562.11"/>
</dbReference>
<dbReference type="GeneID" id="1603"/>
<dbReference type="KEGG" id="hsa:1603"/>
<dbReference type="MANE-Select" id="ENST00000250498.9">
    <property type="protein sequence ID" value="ENSP00000250498.4"/>
    <property type="RefSeq nucleotide sequence ID" value="NM_001344.4"/>
    <property type="RefSeq protein sequence ID" value="NP_001335.1"/>
</dbReference>
<dbReference type="UCSC" id="uc001wgl.3">
    <property type="organism name" value="human"/>
</dbReference>
<dbReference type="AGR" id="HGNC:2664"/>
<dbReference type="CTD" id="1603"/>
<dbReference type="DisGeNET" id="1603"/>
<dbReference type="GeneCards" id="DAD1"/>
<dbReference type="HGNC" id="HGNC:2664">
    <property type="gene designation" value="DAD1"/>
</dbReference>
<dbReference type="HPA" id="ENSG00000129562">
    <property type="expression patterns" value="Low tissue specificity"/>
</dbReference>
<dbReference type="MIM" id="600243">
    <property type="type" value="gene"/>
</dbReference>
<dbReference type="neXtProt" id="NX_P61803"/>
<dbReference type="OpenTargets" id="ENSG00000129562"/>
<dbReference type="PharmGKB" id="PA27136"/>
<dbReference type="VEuPathDB" id="HostDB:ENSG00000129562"/>
<dbReference type="eggNOG" id="KOG1746">
    <property type="taxonomic scope" value="Eukaryota"/>
</dbReference>
<dbReference type="GeneTree" id="ENSGT00390000003324"/>
<dbReference type="HOGENOM" id="CLU_111220_2_1_1"/>
<dbReference type="InParanoid" id="P61803"/>
<dbReference type="OMA" id="HIILHIV"/>
<dbReference type="OrthoDB" id="445566at2759"/>
<dbReference type="PAN-GO" id="P61803">
    <property type="GO annotations" value="2 GO annotations based on evolutionary models"/>
</dbReference>
<dbReference type="PhylomeDB" id="P61803"/>
<dbReference type="TreeFam" id="TF312846"/>
<dbReference type="BRENDA" id="2.4.99.18">
    <property type="organism ID" value="2681"/>
</dbReference>
<dbReference type="PathwayCommons" id="P61803"/>
<dbReference type="Reactome" id="R-HSA-446203">
    <property type="pathway name" value="Asparagine N-linked glycosylation"/>
</dbReference>
<dbReference type="Reactome" id="R-HSA-9694548">
    <property type="pathway name" value="Maturation of spike protein"/>
</dbReference>
<dbReference type="SignaLink" id="P61803"/>
<dbReference type="SIGNOR" id="P61803"/>
<dbReference type="UniPathway" id="UPA00378"/>
<dbReference type="BioGRID-ORCS" id="1603">
    <property type="hits" value="815 hits in 1121 CRISPR screens"/>
</dbReference>
<dbReference type="CD-CODE" id="FB4E32DD">
    <property type="entry name" value="Presynaptic clusters and postsynaptic densities"/>
</dbReference>
<dbReference type="ChiTaRS" id="DAD1">
    <property type="organism name" value="human"/>
</dbReference>
<dbReference type="GeneWiki" id="DAD1"/>
<dbReference type="GenomeRNAi" id="1603"/>
<dbReference type="Pharos" id="P61803">
    <property type="development level" value="Tbio"/>
</dbReference>
<dbReference type="PRO" id="PR:P61803"/>
<dbReference type="Proteomes" id="UP000005640">
    <property type="component" value="Chromosome 14"/>
</dbReference>
<dbReference type="RNAct" id="P61803">
    <property type="molecule type" value="protein"/>
</dbReference>
<dbReference type="Bgee" id="ENSG00000129562">
    <property type="expression patterns" value="Expressed in islet of Langerhans and 207 other cell types or tissues"/>
</dbReference>
<dbReference type="ExpressionAtlas" id="P61803">
    <property type="expression patterns" value="baseline and differential"/>
</dbReference>
<dbReference type="GO" id="GO:0005789">
    <property type="term" value="C:endoplasmic reticulum membrane"/>
    <property type="evidence" value="ECO:0000304"/>
    <property type="project" value="Reactome"/>
</dbReference>
<dbReference type="GO" id="GO:0016020">
    <property type="term" value="C:membrane"/>
    <property type="evidence" value="ECO:0007005"/>
    <property type="project" value="UniProtKB"/>
</dbReference>
<dbReference type="GO" id="GO:0008250">
    <property type="term" value="C:oligosaccharyltransferase complex"/>
    <property type="evidence" value="ECO:0000314"/>
    <property type="project" value="ARUK-UCL"/>
</dbReference>
<dbReference type="GO" id="GO:0160226">
    <property type="term" value="C:oligosaccharyltransferase complex A"/>
    <property type="evidence" value="ECO:0000314"/>
    <property type="project" value="UniProtKB"/>
</dbReference>
<dbReference type="GO" id="GO:0160227">
    <property type="term" value="C:oligosaccharyltransferase complex B"/>
    <property type="evidence" value="ECO:0000314"/>
    <property type="project" value="UniProtKB"/>
</dbReference>
<dbReference type="GO" id="GO:0008047">
    <property type="term" value="F:enzyme activator activity"/>
    <property type="evidence" value="ECO:0000315"/>
    <property type="project" value="ARUK-UCL"/>
</dbReference>
<dbReference type="GO" id="GO:0006915">
    <property type="term" value="P:apoptotic process"/>
    <property type="evidence" value="ECO:0007669"/>
    <property type="project" value="UniProtKB-KW"/>
</dbReference>
<dbReference type="GO" id="GO:0001824">
    <property type="term" value="P:blastocyst development"/>
    <property type="evidence" value="ECO:0007669"/>
    <property type="project" value="Ensembl"/>
</dbReference>
<dbReference type="GO" id="GO:0043066">
    <property type="term" value="P:negative regulation of apoptotic process"/>
    <property type="evidence" value="ECO:0000304"/>
    <property type="project" value="ProtInc"/>
</dbReference>
<dbReference type="GO" id="GO:0006486">
    <property type="term" value="P:protein glycosylation"/>
    <property type="evidence" value="ECO:0000250"/>
    <property type="project" value="UniProtKB"/>
</dbReference>
<dbReference type="GO" id="GO:0006487">
    <property type="term" value="P:protein N-linked glycosylation"/>
    <property type="evidence" value="ECO:0000318"/>
    <property type="project" value="GO_Central"/>
</dbReference>
<dbReference type="GO" id="GO:0018279">
    <property type="term" value="P:protein N-linked glycosylation via asparagine"/>
    <property type="evidence" value="ECO:0000315"/>
    <property type="project" value="ARUK-UCL"/>
</dbReference>
<dbReference type="GO" id="GO:0031647">
    <property type="term" value="P:regulation of protein stability"/>
    <property type="evidence" value="ECO:0000315"/>
    <property type="project" value="ARUK-UCL"/>
</dbReference>
<dbReference type="InterPro" id="IPR003038">
    <property type="entry name" value="DAD/Ost2"/>
</dbReference>
<dbReference type="PANTHER" id="PTHR10705">
    <property type="entry name" value="DOLICHYL-DIPHOSPHOOLIGOSACCHARIDE--PROTEIN GLYCOSYLTRANSFERASE SUBUNIT DAD1"/>
    <property type="match status" value="1"/>
</dbReference>
<dbReference type="PANTHER" id="PTHR10705:SF0">
    <property type="entry name" value="DOLICHYL-DIPHOSPHOOLIGOSACCHARIDE--PROTEIN GLYCOSYLTRANSFERASE SUBUNIT DAD1"/>
    <property type="match status" value="1"/>
</dbReference>
<dbReference type="Pfam" id="PF02109">
    <property type="entry name" value="DAD"/>
    <property type="match status" value="1"/>
</dbReference>
<dbReference type="PIRSF" id="PIRSF005588">
    <property type="entry name" value="DAD"/>
    <property type="match status" value="1"/>
</dbReference>
<gene>
    <name evidence="13" type="primary">DAD1</name>
</gene>
<evidence type="ECO:0000250" key="1">
    <source>
        <dbReference type="UniProtKB" id="E2R4X3"/>
    </source>
</evidence>
<evidence type="ECO:0000255" key="2"/>
<evidence type="ECO:0000269" key="3">
    <source>
    </source>
</evidence>
<evidence type="ECO:0000269" key="4">
    <source>
    </source>
</evidence>
<evidence type="ECO:0000269" key="5">
    <source>
    </source>
</evidence>
<evidence type="ECO:0000269" key="6">
    <source>
    </source>
</evidence>
<evidence type="ECO:0000269" key="7">
    <source>
    </source>
</evidence>
<evidence type="ECO:0000269" key="8">
    <source>
    </source>
</evidence>
<evidence type="ECO:0000269" key="9">
    <source>
    </source>
</evidence>
<evidence type="ECO:0000269" key="10">
    <source ref="5"/>
</evidence>
<evidence type="ECO:0000269" key="11">
    <source ref="9"/>
</evidence>
<evidence type="ECO:0000305" key="12"/>
<evidence type="ECO:0000312" key="13">
    <source>
        <dbReference type="HGNC" id="HGNC:2664"/>
    </source>
</evidence>
<evidence type="ECO:0007744" key="14">
    <source>
        <dbReference type="PDB" id="6S7O"/>
    </source>
</evidence>
<evidence type="ECO:0007744" key="15">
    <source>
        <dbReference type="PDB" id="6S7T"/>
    </source>
</evidence>
<evidence type="ECO:0007744" key="16">
    <source>
        <dbReference type="PDB" id="8B6L"/>
    </source>
</evidence>
<evidence type="ECO:0007744" key="17">
    <source>
        <dbReference type="PDB" id="8PN9"/>
    </source>
</evidence>
<evidence type="ECO:0007744" key="18">
    <source>
    </source>
</evidence>
<evidence type="ECO:0007744" key="19">
    <source>
    </source>
</evidence>
<evidence type="ECO:0007829" key="20">
    <source>
        <dbReference type="PDB" id="6S7O"/>
    </source>
</evidence>
<feature type="initiator methionine" description="Removed" evidence="3 6 11 18 19">
    <location>
        <position position="1"/>
    </location>
</feature>
<feature type="chain" id="PRO_0000124009" description="Dolichyl-diphosphooligosaccharide--protein glycosyltransferase subunit DAD1">
    <location>
        <begin position="2"/>
        <end position="113"/>
    </location>
</feature>
<feature type="topological domain" description="Cytoplasmic" evidence="2">
    <location>
        <begin position="2"/>
        <end position="30"/>
    </location>
</feature>
<feature type="transmembrane region" description="Helical" evidence="2">
    <location>
        <begin position="31"/>
        <end position="51"/>
    </location>
</feature>
<feature type="topological domain" description="Lumenal" evidence="2">
    <location>
        <position position="52"/>
    </location>
</feature>
<feature type="transmembrane region" description="Helical" evidence="2">
    <location>
        <begin position="53"/>
        <end position="73"/>
    </location>
</feature>
<feature type="topological domain" description="Cytoplasmic" evidence="2">
    <location>
        <begin position="74"/>
        <end position="92"/>
    </location>
</feature>
<feature type="transmembrane region" description="Helical" evidence="2">
    <location>
        <begin position="93"/>
        <end position="113"/>
    </location>
</feature>
<feature type="modified residue" description="N-acetylserine" evidence="6 11 18 19">
    <location>
        <position position="2"/>
    </location>
</feature>
<feature type="sequence variant" id="VAR_018825" description="In dbSNP:rs5742796." evidence="10">
    <original>A</original>
    <variation>T</variation>
    <location>
        <position position="83"/>
    </location>
</feature>
<feature type="sequence conflict" description="In Ref. 7; AAH09798." evidence="12" ref="7">
    <original>T</original>
    <variation>I</variation>
    <location>
        <position position="20"/>
    </location>
</feature>
<feature type="helix" evidence="20">
    <location>
        <begin position="7"/>
        <end position="18"/>
    </location>
</feature>
<feature type="helix" evidence="20">
    <location>
        <begin position="22"/>
        <end position="48"/>
    </location>
</feature>
<feature type="helix" evidence="20">
    <location>
        <begin position="53"/>
        <end position="77"/>
    </location>
</feature>
<feature type="helix" evidence="20">
    <location>
        <begin position="79"/>
        <end position="81"/>
    </location>
</feature>
<feature type="turn" evidence="20">
    <location>
        <begin position="82"/>
        <end position="85"/>
    </location>
</feature>
<feature type="helix" evidence="20">
    <location>
        <begin position="90"/>
        <end position="111"/>
    </location>
</feature>
<sequence>MSASVVSVISRFLEEYLSSTPQRLKLLDAYLLYILLTGALQFGYCLLVGTFPFNSFLSGFISCVGSFILAVCLRIQINPQNKADFQGISPERAFADFLFASTILHLVVMNFVG</sequence>